<reference key="1">
    <citation type="submission" date="2008-01" db="EMBL/GenBank/DDBJ databases">
        <title>Complete sequence of Pseudomonas putida GB-1.</title>
        <authorList>
            <consortium name="US DOE Joint Genome Institute"/>
            <person name="Copeland A."/>
            <person name="Lucas S."/>
            <person name="Lapidus A."/>
            <person name="Barry K."/>
            <person name="Glavina del Rio T."/>
            <person name="Dalin E."/>
            <person name="Tice H."/>
            <person name="Pitluck S."/>
            <person name="Bruce D."/>
            <person name="Goodwin L."/>
            <person name="Chertkov O."/>
            <person name="Brettin T."/>
            <person name="Detter J.C."/>
            <person name="Han C."/>
            <person name="Kuske C.R."/>
            <person name="Schmutz J."/>
            <person name="Larimer F."/>
            <person name="Land M."/>
            <person name="Hauser L."/>
            <person name="Kyrpides N."/>
            <person name="Kim E."/>
            <person name="McCarthy J.K."/>
            <person name="Richardson P."/>
        </authorList>
    </citation>
    <scope>NUCLEOTIDE SEQUENCE [LARGE SCALE GENOMIC DNA]</scope>
    <source>
        <strain>GB-1</strain>
    </source>
</reference>
<gene>
    <name evidence="1" type="primary">yciB</name>
    <name type="ordered locus">PputGB1_4007</name>
</gene>
<sequence length="197" mass="22336">MKQFIDFIPLLLFFIVYKLDPRPMEVAGHSFEFGGIYSATAMLIISSLVVYGALFLRQRKLKKGQWLTLIACLVFGGLTLTFHSETFLKWKAPVVNWLFALGFAGSHFIGDRVLIKRIMGHALTLPDAIWSRLNLAWIAFFLFCGAANLFVAFTFQDFWVDFKVFGSLGMTVIFLVAQGVYLSRHLHDDPSTSKPKD</sequence>
<organism>
    <name type="scientific">Pseudomonas putida (strain GB-1)</name>
    <dbReference type="NCBI Taxonomy" id="76869"/>
    <lineage>
        <taxon>Bacteria</taxon>
        <taxon>Pseudomonadati</taxon>
        <taxon>Pseudomonadota</taxon>
        <taxon>Gammaproteobacteria</taxon>
        <taxon>Pseudomonadales</taxon>
        <taxon>Pseudomonadaceae</taxon>
        <taxon>Pseudomonas</taxon>
    </lineage>
</organism>
<accession>B0KRX4</accession>
<proteinExistence type="inferred from homology"/>
<feature type="chain" id="PRO_1000077490" description="Inner membrane-spanning protein YciB">
    <location>
        <begin position="1"/>
        <end position="197"/>
    </location>
</feature>
<feature type="transmembrane region" description="Helical" evidence="1">
    <location>
        <begin position="36"/>
        <end position="56"/>
    </location>
</feature>
<feature type="transmembrane region" description="Helical" evidence="1">
    <location>
        <begin position="64"/>
        <end position="84"/>
    </location>
</feature>
<feature type="transmembrane region" description="Helical" evidence="1">
    <location>
        <begin position="90"/>
        <end position="110"/>
    </location>
</feature>
<feature type="transmembrane region" description="Helical" evidence="1">
    <location>
        <begin position="135"/>
        <end position="155"/>
    </location>
</feature>
<feature type="transmembrane region" description="Helical" evidence="1">
    <location>
        <begin position="162"/>
        <end position="182"/>
    </location>
</feature>
<protein>
    <recommendedName>
        <fullName evidence="1">Inner membrane-spanning protein YciB</fullName>
    </recommendedName>
</protein>
<name>YCIB_PSEPG</name>
<dbReference type="EMBL" id="CP000926">
    <property type="protein sequence ID" value="ABY99897.1"/>
    <property type="molecule type" value="Genomic_DNA"/>
</dbReference>
<dbReference type="RefSeq" id="WP_012273584.1">
    <property type="nucleotide sequence ID" value="NC_010322.1"/>
</dbReference>
<dbReference type="SMR" id="B0KRX4"/>
<dbReference type="KEGG" id="ppg:PputGB1_4007"/>
<dbReference type="eggNOG" id="COG2917">
    <property type="taxonomic scope" value="Bacteria"/>
</dbReference>
<dbReference type="HOGENOM" id="CLU_089554_2_0_6"/>
<dbReference type="Proteomes" id="UP000002157">
    <property type="component" value="Chromosome"/>
</dbReference>
<dbReference type="GO" id="GO:0005886">
    <property type="term" value="C:plasma membrane"/>
    <property type="evidence" value="ECO:0007669"/>
    <property type="project" value="UniProtKB-SubCell"/>
</dbReference>
<dbReference type="HAMAP" id="MF_00189">
    <property type="entry name" value="YciB"/>
    <property type="match status" value="1"/>
</dbReference>
<dbReference type="InterPro" id="IPR006008">
    <property type="entry name" value="YciB"/>
</dbReference>
<dbReference type="NCBIfam" id="TIGR00997">
    <property type="entry name" value="ispZ"/>
    <property type="match status" value="1"/>
</dbReference>
<dbReference type="NCBIfam" id="NF001325">
    <property type="entry name" value="PRK00259.1-3"/>
    <property type="match status" value="1"/>
</dbReference>
<dbReference type="NCBIfam" id="NF001327">
    <property type="entry name" value="PRK00259.1-5"/>
    <property type="match status" value="1"/>
</dbReference>
<dbReference type="PANTHER" id="PTHR36917:SF1">
    <property type="entry name" value="INNER MEMBRANE-SPANNING PROTEIN YCIB"/>
    <property type="match status" value="1"/>
</dbReference>
<dbReference type="PANTHER" id="PTHR36917">
    <property type="entry name" value="INTRACELLULAR SEPTATION PROTEIN A-RELATED"/>
    <property type="match status" value="1"/>
</dbReference>
<dbReference type="Pfam" id="PF04279">
    <property type="entry name" value="IspA"/>
    <property type="match status" value="1"/>
</dbReference>
<evidence type="ECO:0000255" key="1">
    <source>
        <dbReference type="HAMAP-Rule" id="MF_00189"/>
    </source>
</evidence>
<comment type="function">
    <text evidence="1">Plays a role in cell envelope biogenesis, maintenance of cell envelope integrity and membrane homeostasis.</text>
</comment>
<comment type="subcellular location">
    <subcellularLocation>
        <location evidence="1">Cell inner membrane</location>
        <topology evidence="1">Multi-pass membrane protein</topology>
    </subcellularLocation>
</comment>
<comment type="similarity">
    <text evidence="1">Belongs to the YciB family.</text>
</comment>
<keyword id="KW-0997">Cell inner membrane</keyword>
<keyword id="KW-1003">Cell membrane</keyword>
<keyword id="KW-0472">Membrane</keyword>
<keyword id="KW-0812">Transmembrane</keyword>
<keyword id="KW-1133">Transmembrane helix</keyword>